<protein>
    <recommendedName>
        <fullName evidence="1">Potassium-transporting ATPase KdpC subunit</fullName>
    </recommendedName>
    <alternativeName>
        <fullName evidence="1">ATP phosphohydrolase [potassium-transporting] C chain</fullName>
    </alternativeName>
    <alternativeName>
        <fullName evidence="1">Potassium-binding and translocating subunit C</fullName>
    </alternativeName>
    <alternativeName>
        <fullName evidence="1">Potassium-translocating ATPase C chain</fullName>
    </alternativeName>
</protein>
<accession>A5GAG0</accession>
<sequence>MKEIKPAILFFIVFTILCGGVYPAVVTSIAHAVFPKQAKGSFITDKSGREIGSALIGQPFSDARYFWPRPSATTDFGYNPMTSGGSNSGPTNPDFLKTVGDRVKSLHDTGITGNIPADLVEASASGLDPHITPEAAKVQVPRVAKARGMTMEELKKLVDARTEDRQLGFLGEQRVNVLELNLELDKLSR</sequence>
<gene>
    <name evidence="1" type="primary">kdpC</name>
    <name type="ordered locus">Gura_1225</name>
</gene>
<keyword id="KW-0067">ATP-binding</keyword>
<keyword id="KW-0997">Cell inner membrane</keyword>
<keyword id="KW-1003">Cell membrane</keyword>
<keyword id="KW-0406">Ion transport</keyword>
<keyword id="KW-0472">Membrane</keyword>
<keyword id="KW-0547">Nucleotide-binding</keyword>
<keyword id="KW-0630">Potassium</keyword>
<keyword id="KW-0633">Potassium transport</keyword>
<keyword id="KW-1185">Reference proteome</keyword>
<keyword id="KW-0812">Transmembrane</keyword>
<keyword id="KW-1133">Transmembrane helix</keyword>
<keyword id="KW-0813">Transport</keyword>
<comment type="function">
    <text evidence="1">Part of the high-affinity ATP-driven potassium transport (or Kdp) system, which catalyzes the hydrolysis of ATP coupled with the electrogenic transport of potassium into the cytoplasm. This subunit acts as a catalytic chaperone that increases the ATP-binding affinity of the ATP-hydrolyzing subunit KdpB by the formation of a transient KdpB/KdpC/ATP ternary complex.</text>
</comment>
<comment type="subunit">
    <text evidence="1">The system is composed of three essential subunits: KdpA, KdpB and KdpC.</text>
</comment>
<comment type="subcellular location">
    <subcellularLocation>
        <location evidence="1">Cell inner membrane</location>
        <topology evidence="1">Single-pass membrane protein</topology>
    </subcellularLocation>
</comment>
<comment type="similarity">
    <text evidence="1">Belongs to the KdpC family.</text>
</comment>
<proteinExistence type="inferred from homology"/>
<dbReference type="EMBL" id="CP000698">
    <property type="protein sequence ID" value="ABQ25429.1"/>
    <property type="molecule type" value="Genomic_DNA"/>
</dbReference>
<dbReference type="RefSeq" id="WP_011938151.1">
    <property type="nucleotide sequence ID" value="NC_009483.1"/>
</dbReference>
<dbReference type="SMR" id="A5GAG0"/>
<dbReference type="STRING" id="351605.Gura_1225"/>
<dbReference type="KEGG" id="gur:Gura_1225"/>
<dbReference type="HOGENOM" id="CLU_077094_2_0_7"/>
<dbReference type="OrthoDB" id="9788285at2"/>
<dbReference type="Proteomes" id="UP000006695">
    <property type="component" value="Chromosome"/>
</dbReference>
<dbReference type="GO" id="GO:0005886">
    <property type="term" value="C:plasma membrane"/>
    <property type="evidence" value="ECO:0007669"/>
    <property type="project" value="UniProtKB-SubCell"/>
</dbReference>
<dbReference type="GO" id="GO:0005524">
    <property type="term" value="F:ATP binding"/>
    <property type="evidence" value="ECO:0007669"/>
    <property type="project" value="UniProtKB-UniRule"/>
</dbReference>
<dbReference type="GO" id="GO:0008556">
    <property type="term" value="F:P-type potassium transmembrane transporter activity"/>
    <property type="evidence" value="ECO:0007669"/>
    <property type="project" value="InterPro"/>
</dbReference>
<dbReference type="HAMAP" id="MF_00276">
    <property type="entry name" value="KdpC"/>
    <property type="match status" value="1"/>
</dbReference>
<dbReference type="InterPro" id="IPR003820">
    <property type="entry name" value="KdpC"/>
</dbReference>
<dbReference type="NCBIfam" id="TIGR00681">
    <property type="entry name" value="kdpC"/>
    <property type="match status" value="1"/>
</dbReference>
<dbReference type="NCBIfam" id="NF001454">
    <property type="entry name" value="PRK00315.1"/>
    <property type="match status" value="1"/>
</dbReference>
<dbReference type="PANTHER" id="PTHR30042">
    <property type="entry name" value="POTASSIUM-TRANSPORTING ATPASE C CHAIN"/>
    <property type="match status" value="1"/>
</dbReference>
<dbReference type="PANTHER" id="PTHR30042:SF2">
    <property type="entry name" value="POTASSIUM-TRANSPORTING ATPASE KDPC SUBUNIT"/>
    <property type="match status" value="1"/>
</dbReference>
<dbReference type="Pfam" id="PF02669">
    <property type="entry name" value="KdpC"/>
    <property type="match status" value="1"/>
</dbReference>
<dbReference type="PIRSF" id="PIRSF001296">
    <property type="entry name" value="K_ATPase_KdpC"/>
    <property type="match status" value="1"/>
</dbReference>
<feature type="chain" id="PRO_1000078796" description="Potassium-transporting ATPase KdpC subunit">
    <location>
        <begin position="1"/>
        <end position="189"/>
    </location>
</feature>
<feature type="transmembrane region" description="Helical" evidence="1">
    <location>
        <begin position="6"/>
        <end position="26"/>
    </location>
</feature>
<name>KDPC_GEOUR</name>
<organism>
    <name type="scientific">Geotalea uraniireducens (strain Rf4)</name>
    <name type="common">Geobacter uraniireducens</name>
    <dbReference type="NCBI Taxonomy" id="351605"/>
    <lineage>
        <taxon>Bacteria</taxon>
        <taxon>Pseudomonadati</taxon>
        <taxon>Thermodesulfobacteriota</taxon>
        <taxon>Desulfuromonadia</taxon>
        <taxon>Geobacterales</taxon>
        <taxon>Geobacteraceae</taxon>
        <taxon>Geotalea</taxon>
    </lineage>
</organism>
<reference key="1">
    <citation type="submission" date="2007-05" db="EMBL/GenBank/DDBJ databases">
        <title>Complete sequence of Geobacter uraniireducens Rf4.</title>
        <authorList>
            <consortium name="US DOE Joint Genome Institute"/>
            <person name="Copeland A."/>
            <person name="Lucas S."/>
            <person name="Lapidus A."/>
            <person name="Barry K."/>
            <person name="Detter J.C."/>
            <person name="Glavina del Rio T."/>
            <person name="Hammon N."/>
            <person name="Israni S."/>
            <person name="Dalin E."/>
            <person name="Tice H."/>
            <person name="Pitluck S."/>
            <person name="Chertkov O."/>
            <person name="Brettin T."/>
            <person name="Bruce D."/>
            <person name="Han C."/>
            <person name="Schmutz J."/>
            <person name="Larimer F."/>
            <person name="Land M."/>
            <person name="Hauser L."/>
            <person name="Kyrpides N."/>
            <person name="Mikhailova N."/>
            <person name="Shelobolina E."/>
            <person name="Aklujkar M."/>
            <person name="Lovley D."/>
            <person name="Richardson P."/>
        </authorList>
    </citation>
    <scope>NUCLEOTIDE SEQUENCE [LARGE SCALE GENOMIC DNA]</scope>
    <source>
        <strain>ATCC BAA-1134 / JCM 13001 / Rf4</strain>
    </source>
</reference>
<evidence type="ECO:0000255" key="1">
    <source>
        <dbReference type="HAMAP-Rule" id="MF_00276"/>
    </source>
</evidence>